<name>CYAY_SERP5</name>
<proteinExistence type="inferred from homology"/>
<keyword id="KW-0408">Iron</keyword>
<keyword id="KW-0479">Metal-binding</keyword>
<comment type="function">
    <text evidence="1">Involved in iron-sulfur (Fe-S) cluster assembly. May act as a regulator of Fe-S biogenesis.</text>
</comment>
<comment type="similarity">
    <text evidence="1">Belongs to the frataxin family.</text>
</comment>
<sequence length="106" mass="12009">MNDSEFHQLADQLMLNIEETLDDFDGDADIDYETNGGVMTLSFENGTKIVINRQEPLHQVWLATKTGGYHFNYRDGVWLCDRSDRAFYPLLSEAASAQAGEEVKFA</sequence>
<dbReference type="EMBL" id="CP000826">
    <property type="protein sequence ID" value="ABV39290.1"/>
    <property type="molecule type" value="Genomic_DNA"/>
</dbReference>
<dbReference type="SMR" id="A8G850"/>
<dbReference type="STRING" id="399741.Spro_0180"/>
<dbReference type="KEGG" id="spe:Spro_0180"/>
<dbReference type="eggNOG" id="COG1965">
    <property type="taxonomic scope" value="Bacteria"/>
</dbReference>
<dbReference type="HOGENOM" id="CLU_080880_3_0_6"/>
<dbReference type="OrthoDB" id="285675at2"/>
<dbReference type="GO" id="GO:0005829">
    <property type="term" value="C:cytosol"/>
    <property type="evidence" value="ECO:0007669"/>
    <property type="project" value="TreeGrafter"/>
</dbReference>
<dbReference type="GO" id="GO:0008199">
    <property type="term" value="F:ferric iron binding"/>
    <property type="evidence" value="ECO:0007669"/>
    <property type="project" value="InterPro"/>
</dbReference>
<dbReference type="GO" id="GO:0008198">
    <property type="term" value="F:ferrous iron binding"/>
    <property type="evidence" value="ECO:0007669"/>
    <property type="project" value="TreeGrafter"/>
</dbReference>
<dbReference type="GO" id="GO:0016226">
    <property type="term" value="P:iron-sulfur cluster assembly"/>
    <property type="evidence" value="ECO:0007669"/>
    <property type="project" value="UniProtKB-UniRule"/>
</dbReference>
<dbReference type="CDD" id="cd00503">
    <property type="entry name" value="Frataxin"/>
    <property type="match status" value="1"/>
</dbReference>
<dbReference type="Gene3D" id="3.30.920.10">
    <property type="entry name" value="Frataxin/CyaY"/>
    <property type="match status" value="1"/>
</dbReference>
<dbReference type="HAMAP" id="MF_00142">
    <property type="entry name" value="CyaY"/>
    <property type="match status" value="1"/>
</dbReference>
<dbReference type="InterPro" id="IPR047584">
    <property type="entry name" value="CyaY"/>
</dbReference>
<dbReference type="InterPro" id="IPR002908">
    <property type="entry name" value="Frataxin/CyaY"/>
</dbReference>
<dbReference type="InterPro" id="IPR036524">
    <property type="entry name" value="Frataxin/CyaY_sf"/>
</dbReference>
<dbReference type="InterPro" id="IPR020895">
    <property type="entry name" value="Frataxin_CS"/>
</dbReference>
<dbReference type="NCBIfam" id="TIGR03421">
    <property type="entry name" value="FeS_CyaY"/>
    <property type="match status" value="1"/>
</dbReference>
<dbReference type="PANTHER" id="PTHR16821">
    <property type="entry name" value="FRATAXIN"/>
    <property type="match status" value="1"/>
</dbReference>
<dbReference type="PANTHER" id="PTHR16821:SF2">
    <property type="entry name" value="FRATAXIN, MITOCHONDRIAL"/>
    <property type="match status" value="1"/>
</dbReference>
<dbReference type="Pfam" id="PF01491">
    <property type="entry name" value="Frataxin_Cyay"/>
    <property type="match status" value="1"/>
</dbReference>
<dbReference type="SMART" id="SM01219">
    <property type="entry name" value="Frataxin_Cyay"/>
    <property type="match status" value="1"/>
</dbReference>
<dbReference type="SUPFAM" id="SSF55387">
    <property type="entry name" value="Frataxin/Nqo15-like"/>
    <property type="match status" value="1"/>
</dbReference>
<dbReference type="PROSITE" id="PS01344">
    <property type="entry name" value="FRATAXIN_1"/>
    <property type="match status" value="1"/>
</dbReference>
<dbReference type="PROSITE" id="PS50810">
    <property type="entry name" value="FRATAXIN_2"/>
    <property type="match status" value="1"/>
</dbReference>
<feature type="chain" id="PRO_1000057933" description="Iron-sulfur cluster assembly protein CyaY">
    <location>
        <begin position="1"/>
        <end position="106"/>
    </location>
</feature>
<protein>
    <recommendedName>
        <fullName evidence="1">Iron-sulfur cluster assembly protein CyaY</fullName>
    </recommendedName>
</protein>
<reference key="1">
    <citation type="submission" date="2007-09" db="EMBL/GenBank/DDBJ databases">
        <title>Complete sequence of chromosome of Serratia proteamaculans 568.</title>
        <authorList>
            <consortium name="US DOE Joint Genome Institute"/>
            <person name="Copeland A."/>
            <person name="Lucas S."/>
            <person name="Lapidus A."/>
            <person name="Barry K."/>
            <person name="Glavina del Rio T."/>
            <person name="Dalin E."/>
            <person name="Tice H."/>
            <person name="Pitluck S."/>
            <person name="Chain P."/>
            <person name="Malfatti S."/>
            <person name="Shin M."/>
            <person name="Vergez L."/>
            <person name="Schmutz J."/>
            <person name="Larimer F."/>
            <person name="Land M."/>
            <person name="Hauser L."/>
            <person name="Kyrpides N."/>
            <person name="Kim E."/>
            <person name="Taghavi S."/>
            <person name="Newman L."/>
            <person name="Vangronsveld J."/>
            <person name="van der Lelie D."/>
            <person name="Richardson P."/>
        </authorList>
    </citation>
    <scope>NUCLEOTIDE SEQUENCE [LARGE SCALE GENOMIC DNA]</scope>
    <source>
        <strain>568</strain>
    </source>
</reference>
<organism>
    <name type="scientific">Serratia proteamaculans (strain 568)</name>
    <dbReference type="NCBI Taxonomy" id="399741"/>
    <lineage>
        <taxon>Bacteria</taxon>
        <taxon>Pseudomonadati</taxon>
        <taxon>Pseudomonadota</taxon>
        <taxon>Gammaproteobacteria</taxon>
        <taxon>Enterobacterales</taxon>
        <taxon>Yersiniaceae</taxon>
        <taxon>Serratia</taxon>
    </lineage>
</organism>
<gene>
    <name evidence="1" type="primary">cyaY</name>
    <name type="ordered locus">Spro_0180</name>
</gene>
<accession>A8G850</accession>
<evidence type="ECO:0000255" key="1">
    <source>
        <dbReference type="HAMAP-Rule" id="MF_00142"/>
    </source>
</evidence>